<sequence>MMPSRTNLATGIPSSKVKYSRLSSTDDGYIDLQFKKSPPKIPYKAIALATVLFLIGAFLIIIGSLLLAGYISKGGADRAVPVLIIGILVFLPGFYHLRIAYYASKGYRGYSYDDIPDFDD</sequence>
<protein>
    <recommendedName>
        <fullName>Transmembrane protein 230</fullName>
    </recommendedName>
</protein>
<comment type="function">
    <text evidence="1">Involved in trafficking and recycling of synaptic vesicles.</text>
</comment>
<comment type="subcellular location">
    <subcellularLocation>
        <location evidence="3">Membrane</location>
        <topology evidence="3">Multi-pass membrane protein</topology>
    </subcellularLocation>
    <subcellularLocation>
        <location evidence="1">Golgi apparatus</location>
        <location evidence="1">trans-Golgi network</location>
    </subcellularLocation>
    <subcellularLocation>
        <location evidence="1">Cytoplasmic vesicle</location>
        <location evidence="1">Secretory vesicle</location>
        <location evidence="1">Synaptic vesicle</location>
    </subcellularLocation>
    <subcellularLocation>
        <location evidence="1">Early endosome</location>
    </subcellularLocation>
    <subcellularLocation>
        <location evidence="1">Recycling endosome</location>
    </subcellularLocation>
    <subcellularLocation>
        <location evidence="1">Late endosome</location>
    </subcellularLocation>
    <subcellularLocation>
        <location evidence="1">Cytoplasmic vesicle</location>
        <location evidence="1">Autophagosome</location>
    </subcellularLocation>
</comment>
<comment type="similarity">
    <text evidence="3">Belongs to the TMEM134/TMEM230 family.</text>
</comment>
<evidence type="ECO:0000250" key="1">
    <source>
        <dbReference type="UniProtKB" id="Q96A57"/>
    </source>
</evidence>
<evidence type="ECO:0000255" key="2"/>
<evidence type="ECO:0000305" key="3"/>
<reference key="1">
    <citation type="journal article" date="2005" name="BMC Genomics">
        <title>Characterization of 954 bovine full-CDS cDNA sequences.</title>
        <authorList>
            <person name="Harhay G.P."/>
            <person name="Sonstegard T.S."/>
            <person name="Keele J.W."/>
            <person name="Heaton M.P."/>
            <person name="Clawson M.L."/>
            <person name="Snelling W.M."/>
            <person name="Wiedmann R.T."/>
            <person name="Van Tassell C.P."/>
            <person name="Smith T.P.L."/>
        </authorList>
    </citation>
    <scope>NUCLEOTIDE SEQUENCE [LARGE SCALE MRNA]</scope>
</reference>
<reference key="2">
    <citation type="submission" date="2005-11" db="EMBL/GenBank/DDBJ databases">
        <authorList>
            <consortium name="NIH - Mammalian Gene Collection (MGC) project"/>
        </authorList>
    </citation>
    <scope>NUCLEOTIDE SEQUENCE [LARGE SCALE MRNA]</scope>
    <source>
        <strain>Crossbred X Angus</strain>
        <tissue>Liver</tissue>
    </source>
</reference>
<proteinExistence type="evidence at transcript level"/>
<organism>
    <name type="scientific">Bos taurus</name>
    <name type="common">Bovine</name>
    <dbReference type="NCBI Taxonomy" id="9913"/>
    <lineage>
        <taxon>Eukaryota</taxon>
        <taxon>Metazoa</taxon>
        <taxon>Chordata</taxon>
        <taxon>Craniata</taxon>
        <taxon>Vertebrata</taxon>
        <taxon>Euteleostomi</taxon>
        <taxon>Mammalia</taxon>
        <taxon>Eutheria</taxon>
        <taxon>Laurasiatheria</taxon>
        <taxon>Artiodactyla</taxon>
        <taxon>Ruminantia</taxon>
        <taxon>Pecora</taxon>
        <taxon>Bovidae</taxon>
        <taxon>Bovinae</taxon>
        <taxon>Bos</taxon>
    </lineage>
</organism>
<accession>Q5E975</accession>
<dbReference type="EMBL" id="BT021045">
    <property type="protein sequence ID" value="AAX09062.1"/>
    <property type="molecule type" value="mRNA"/>
</dbReference>
<dbReference type="EMBL" id="BC109791">
    <property type="protein sequence ID" value="AAI09792.1"/>
    <property type="molecule type" value="mRNA"/>
</dbReference>
<dbReference type="RefSeq" id="NP_001014930.1">
    <property type="nucleotide sequence ID" value="NM_001014930.3"/>
</dbReference>
<dbReference type="RefSeq" id="XP_005214513.1">
    <property type="nucleotide sequence ID" value="XM_005214456.5"/>
</dbReference>
<dbReference type="SMR" id="Q5E975"/>
<dbReference type="FunCoup" id="Q5E975">
    <property type="interactions" value="2940"/>
</dbReference>
<dbReference type="STRING" id="9913.ENSBTAP00000007965"/>
<dbReference type="PaxDb" id="9913-ENSBTAP00000007965"/>
<dbReference type="Ensembl" id="ENSBTAT00000007965.3">
    <property type="protein sequence ID" value="ENSBTAP00000007965.2"/>
    <property type="gene ID" value="ENSBTAG00000006063.5"/>
</dbReference>
<dbReference type="GeneID" id="515498"/>
<dbReference type="KEGG" id="bta:515498"/>
<dbReference type="CTD" id="29058"/>
<dbReference type="VEuPathDB" id="HostDB:ENSBTAG00000006063"/>
<dbReference type="eggNOG" id="KOG4753">
    <property type="taxonomic scope" value="Eukaryota"/>
</dbReference>
<dbReference type="GeneTree" id="ENSGT00390000008694"/>
<dbReference type="HOGENOM" id="CLU_126638_1_0_1"/>
<dbReference type="InParanoid" id="Q5E975"/>
<dbReference type="OMA" id="AYYAYYK"/>
<dbReference type="OrthoDB" id="5597044at2759"/>
<dbReference type="TreeFam" id="TF329240"/>
<dbReference type="Proteomes" id="UP000009136">
    <property type="component" value="Chromosome 13"/>
</dbReference>
<dbReference type="Bgee" id="ENSBTAG00000006063">
    <property type="expression patterns" value="Expressed in caput epididymis and 102 other cell types or tissues"/>
</dbReference>
<dbReference type="GO" id="GO:0005776">
    <property type="term" value="C:autophagosome"/>
    <property type="evidence" value="ECO:0007669"/>
    <property type="project" value="UniProtKB-SubCell"/>
</dbReference>
<dbReference type="GO" id="GO:0005769">
    <property type="term" value="C:early endosome"/>
    <property type="evidence" value="ECO:0000250"/>
    <property type="project" value="UniProtKB"/>
</dbReference>
<dbReference type="GO" id="GO:0012505">
    <property type="term" value="C:endomembrane system"/>
    <property type="evidence" value="ECO:0000318"/>
    <property type="project" value="GO_Central"/>
</dbReference>
<dbReference type="GO" id="GO:0005770">
    <property type="term" value="C:late endosome"/>
    <property type="evidence" value="ECO:0000250"/>
    <property type="project" value="UniProtKB"/>
</dbReference>
<dbReference type="GO" id="GO:0016020">
    <property type="term" value="C:membrane"/>
    <property type="evidence" value="ECO:0007669"/>
    <property type="project" value="UniProtKB-SubCell"/>
</dbReference>
<dbReference type="GO" id="GO:0055037">
    <property type="term" value="C:recycling endosome"/>
    <property type="evidence" value="ECO:0000250"/>
    <property type="project" value="UniProtKB"/>
</dbReference>
<dbReference type="GO" id="GO:0008021">
    <property type="term" value="C:synaptic vesicle"/>
    <property type="evidence" value="ECO:0000250"/>
    <property type="project" value="UniProtKB"/>
</dbReference>
<dbReference type="GO" id="GO:0005802">
    <property type="term" value="C:trans-Golgi network"/>
    <property type="evidence" value="ECO:0000250"/>
    <property type="project" value="UniProtKB"/>
</dbReference>
<dbReference type="GO" id="GO:0048489">
    <property type="term" value="P:synaptic vesicle transport"/>
    <property type="evidence" value="ECO:0000250"/>
    <property type="project" value="UniProtKB"/>
</dbReference>
<dbReference type="InterPro" id="IPR044234">
    <property type="entry name" value="TMEM230"/>
</dbReference>
<dbReference type="InterPro" id="IPR008590">
    <property type="entry name" value="TMEM_230/134"/>
</dbReference>
<dbReference type="PANTHER" id="PTHR15664">
    <property type="entry name" value="C20ORF30 PROTEIN"/>
    <property type="match status" value="1"/>
</dbReference>
<dbReference type="PANTHER" id="PTHR15664:SF6">
    <property type="entry name" value="TRANSMEMBRANE PROTEIN 230"/>
    <property type="match status" value="1"/>
</dbReference>
<dbReference type="Pfam" id="PF05915">
    <property type="entry name" value="TMEM_230_134"/>
    <property type="match status" value="1"/>
</dbReference>
<gene>
    <name type="primary">TMEM230</name>
</gene>
<name>TM230_BOVIN</name>
<keyword id="KW-0968">Cytoplasmic vesicle</keyword>
<keyword id="KW-0967">Endosome</keyword>
<keyword id="KW-0333">Golgi apparatus</keyword>
<keyword id="KW-0472">Membrane</keyword>
<keyword id="KW-0597">Phosphoprotein</keyword>
<keyword id="KW-1185">Reference proteome</keyword>
<keyword id="KW-0770">Synapse</keyword>
<keyword id="KW-0812">Transmembrane</keyword>
<keyword id="KW-1133">Transmembrane helix</keyword>
<feature type="chain" id="PRO_0000233891" description="Transmembrane protein 230">
    <location>
        <begin position="1"/>
        <end position="120"/>
    </location>
</feature>
<feature type="transmembrane region" description="Helical" evidence="2">
    <location>
        <begin position="51"/>
        <end position="71"/>
    </location>
</feature>
<feature type="transmembrane region" description="Helical" evidence="2">
    <location>
        <begin position="79"/>
        <end position="99"/>
    </location>
</feature>
<feature type="modified residue" description="Phosphoserine" evidence="1">
    <location>
        <position position="15"/>
    </location>
</feature>
<feature type="modified residue" description="Phosphoserine" evidence="1">
    <location>
        <position position="23"/>
    </location>
</feature>
<feature type="modified residue" description="Phosphoserine" evidence="1">
    <location>
        <position position="24"/>
    </location>
</feature>